<evidence type="ECO:0000255" key="1">
    <source>
        <dbReference type="HAMAP-Rule" id="MF_00452"/>
    </source>
</evidence>
<name>PCKG_SALAI</name>
<feature type="chain" id="PRO_1000080988" description="Phosphoenolpyruvate carboxykinase [GTP]">
    <location>
        <begin position="1"/>
        <end position="612"/>
    </location>
</feature>
<feature type="active site" evidence="1">
    <location>
        <position position="274"/>
    </location>
</feature>
<feature type="binding site" evidence="1">
    <location>
        <position position="82"/>
    </location>
    <ligand>
        <name>substrate</name>
    </ligand>
</feature>
<feature type="binding site" evidence="1">
    <location>
        <begin position="221"/>
        <end position="223"/>
    </location>
    <ligand>
        <name>substrate</name>
    </ligand>
</feature>
<feature type="binding site" evidence="1">
    <location>
        <position position="230"/>
    </location>
    <ligand>
        <name>Mn(2+)</name>
        <dbReference type="ChEBI" id="CHEBI:29035"/>
    </ligand>
</feature>
<feature type="binding site" evidence="1">
    <location>
        <position position="250"/>
    </location>
    <ligand>
        <name>Mn(2+)</name>
        <dbReference type="ChEBI" id="CHEBI:29035"/>
    </ligand>
</feature>
<feature type="binding site" evidence="1">
    <location>
        <position position="272"/>
    </location>
    <ligand>
        <name>substrate</name>
    </ligand>
</feature>
<feature type="binding site" evidence="1">
    <location>
        <begin position="273"/>
        <end position="278"/>
    </location>
    <ligand>
        <name>GTP</name>
        <dbReference type="ChEBI" id="CHEBI:37565"/>
    </ligand>
</feature>
<feature type="binding site" evidence="1">
    <location>
        <position position="297"/>
    </location>
    <ligand>
        <name>Mn(2+)</name>
        <dbReference type="ChEBI" id="CHEBI:29035"/>
    </ligand>
</feature>
<feature type="binding site" evidence="1">
    <location>
        <begin position="387"/>
        <end position="389"/>
    </location>
    <ligand>
        <name>substrate</name>
    </ligand>
</feature>
<feature type="binding site" evidence="1">
    <location>
        <position position="389"/>
    </location>
    <ligand>
        <name>GTP</name>
        <dbReference type="ChEBI" id="CHEBI:37565"/>
    </ligand>
</feature>
<feature type="binding site" evidence="1">
    <location>
        <position position="420"/>
    </location>
    <ligand>
        <name>GTP</name>
        <dbReference type="ChEBI" id="CHEBI:37565"/>
    </ligand>
</feature>
<feature type="binding site" evidence="1">
    <location>
        <begin position="517"/>
        <end position="520"/>
    </location>
    <ligand>
        <name>GTP</name>
        <dbReference type="ChEBI" id="CHEBI:37565"/>
    </ligand>
</feature>
<comment type="function">
    <text evidence="1">Catalyzes the conversion of oxaloacetate (OAA) to phosphoenolpyruvate (PEP), the rate-limiting step in the metabolic pathway that produces glucose from lactate and other precursors derived from the citric acid cycle.</text>
</comment>
<comment type="catalytic activity">
    <reaction evidence="1">
        <text>oxaloacetate + GTP = phosphoenolpyruvate + GDP + CO2</text>
        <dbReference type="Rhea" id="RHEA:10388"/>
        <dbReference type="ChEBI" id="CHEBI:16452"/>
        <dbReference type="ChEBI" id="CHEBI:16526"/>
        <dbReference type="ChEBI" id="CHEBI:37565"/>
        <dbReference type="ChEBI" id="CHEBI:58189"/>
        <dbReference type="ChEBI" id="CHEBI:58702"/>
        <dbReference type="EC" id="4.1.1.32"/>
    </reaction>
</comment>
<comment type="cofactor">
    <cofactor evidence="1">
        <name>Mn(2+)</name>
        <dbReference type="ChEBI" id="CHEBI:29035"/>
    </cofactor>
    <text evidence="1">Binds 1 Mn(2+) ion per subunit.</text>
</comment>
<comment type="pathway">
    <text evidence="1">Carbohydrate biosynthesis; gluconeogenesis.</text>
</comment>
<comment type="subunit">
    <text evidence="1">Monomer.</text>
</comment>
<comment type="subcellular location">
    <subcellularLocation>
        <location evidence="1">Cytoplasm</location>
    </subcellularLocation>
</comment>
<comment type="similarity">
    <text evidence="1">Belongs to the phosphoenolpyruvate carboxykinase [GTP] family.</text>
</comment>
<accession>A8M2V8</accession>
<proteinExistence type="inferred from homology"/>
<gene>
    <name evidence="1" type="primary">pckG</name>
    <name type="ordered locus">Sare_0807</name>
</gene>
<keyword id="KW-0963">Cytoplasm</keyword>
<keyword id="KW-0210">Decarboxylase</keyword>
<keyword id="KW-0312">Gluconeogenesis</keyword>
<keyword id="KW-0342">GTP-binding</keyword>
<keyword id="KW-0456">Lyase</keyword>
<keyword id="KW-0464">Manganese</keyword>
<keyword id="KW-0479">Metal-binding</keyword>
<keyword id="KW-0547">Nucleotide-binding</keyword>
<protein>
    <recommendedName>
        <fullName evidence="1">Phosphoenolpyruvate carboxykinase [GTP]</fullName>
        <shortName evidence="1">PEP carboxykinase</shortName>
        <shortName evidence="1">PEPCK</shortName>
        <ecNumber evidence="1">4.1.1.32</ecNumber>
    </recommendedName>
</protein>
<dbReference type="EC" id="4.1.1.32" evidence="1"/>
<dbReference type="EMBL" id="CP000850">
    <property type="protein sequence ID" value="ABV96726.1"/>
    <property type="molecule type" value="Genomic_DNA"/>
</dbReference>
<dbReference type="SMR" id="A8M2V8"/>
<dbReference type="STRING" id="391037.Sare_0807"/>
<dbReference type="KEGG" id="saq:Sare_0807"/>
<dbReference type="PATRIC" id="fig|391037.6.peg.823"/>
<dbReference type="eggNOG" id="COG1274">
    <property type="taxonomic scope" value="Bacteria"/>
</dbReference>
<dbReference type="HOGENOM" id="CLU_028872_1_1_11"/>
<dbReference type="OrthoDB" id="9758871at2"/>
<dbReference type="UniPathway" id="UPA00138"/>
<dbReference type="GO" id="GO:0005829">
    <property type="term" value="C:cytosol"/>
    <property type="evidence" value="ECO:0007669"/>
    <property type="project" value="TreeGrafter"/>
</dbReference>
<dbReference type="GO" id="GO:0005525">
    <property type="term" value="F:GTP binding"/>
    <property type="evidence" value="ECO:0007669"/>
    <property type="project" value="UniProtKB-UniRule"/>
</dbReference>
<dbReference type="GO" id="GO:0030145">
    <property type="term" value="F:manganese ion binding"/>
    <property type="evidence" value="ECO:0007669"/>
    <property type="project" value="UniProtKB-UniRule"/>
</dbReference>
<dbReference type="GO" id="GO:0004613">
    <property type="term" value="F:phosphoenolpyruvate carboxykinase (GTP) activity"/>
    <property type="evidence" value="ECO:0007669"/>
    <property type="project" value="UniProtKB-UniRule"/>
</dbReference>
<dbReference type="GO" id="GO:0071333">
    <property type="term" value="P:cellular response to glucose stimulus"/>
    <property type="evidence" value="ECO:0007669"/>
    <property type="project" value="TreeGrafter"/>
</dbReference>
<dbReference type="GO" id="GO:0006094">
    <property type="term" value="P:gluconeogenesis"/>
    <property type="evidence" value="ECO:0007669"/>
    <property type="project" value="UniProtKB-UniRule"/>
</dbReference>
<dbReference type="GO" id="GO:0046327">
    <property type="term" value="P:glycerol biosynthetic process from pyruvate"/>
    <property type="evidence" value="ECO:0007669"/>
    <property type="project" value="TreeGrafter"/>
</dbReference>
<dbReference type="GO" id="GO:0006107">
    <property type="term" value="P:oxaloacetate metabolic process"/>
    <property type="evidence" value="ECO:0007669"/>
    <property type="project" value="TreeGrafter"/>
</dbReference>
<dbReference type="GO" id="GO:0019543">
    <property type="term" value="P:propionate catabolic process"/>
    <property type="evidence" value="ECO:0007669"/>
    <property type="project" value="TreeGrafter"/>
</dbReference>
<dbReference type="GO" id="GO:0033993">
    <property type="term" value="P:response to lipid"/>
    <property type="evidence" value="ECO:0007669"/>
    <property type="project" value="TreeGrafter"/>
</dbReference>
<dbReference type="GO" id="GO:0042594">
    <property type="term" value="P:response to starvation"/>
    <property type="evidence" value="ECO:0007669"/>
    <property type="project" value="TreeGrafter"/>
</dbReference>
<dbReference type="CDD" id="cd00819">
    <property type="entry name" value="PEPCK_GTP"/>
    <property type="match status" value="1"/>
</dbReference>
<dbReference type="FunFam" id="3.40.449.10:FF:000005">
    <property type="entry name" value="Phosphoenolpyruvate carboxykinase [GTP]"/>
    <property type="match status" value="1"/>
</dbReference>
<dbReference type="Gene3D" id="3.90.228.20">
    <property type="match status" value="1"/>
</dbReference>
<dbReference type="Gene3D" id="3.40.449.10">
    <property type="entry name" value="Phosphoenolpyruvate Carboxykinase, domain 1"/>
    <property type="match status" value="1"/>
</dbReference>
<dbReference type="Gene3D" id="2.170.8.10">
    <property type="entry name" value="Phosphoenolpyruvate Carboxykinase, domain 2"/>
    <property type="match status" value="1"/>
</dbReference>
<dbReference type="HAMAP" id="MF_00452">
    <property type="entry name" value="PEPCK_GTP"/>
    <property type="match status" value="1"/>
</dbReference>
<dbReference type="InterPro" id="IPR018091">
    <property type="entry name" value="PEP_carboxykin_GTP_CS"/>
</dbReference>
<dbReference type="InterPro" id="IPR013035">
    <property type="entry name" value="PEP_carboxykinase_C"/>
</dbReference>
<dbReference type="InterPro" id="IPR008209">
    <property type="entry name" value="PEP_carboxykinase_GTP"/>
</dbReference>
<dbReference type="InterPro" id="IPR035077">
    <property type="entry name" value="PEP_carboxykinase_GTP_C"/>
</dbReference>
<dbReference type="InterPro" id="IPR035078">
    <property type="entry name" value="PEP_carboxykinase_GTP_N"/>
</dbReference>
<dbReference type="InterPro" id="IPR008210">
    <property type="entry name" value="PEP_carboxykinase_N"/>
</dbReference>
<dbReference type="NCBIfam" id="NF003253">
    <property type="entry name" value="PRK04210.1"/>
    <property type="match status" value="1"/>
</dbReference>
<dbReference type="PANTHER" id="PTHR11561">
    <property type="entry name" value="PHOSPHOENOLPYRUVATE CARBOXYKINASE"/>
    <property type="match status" value="1"/>
</dbReference>
<dbReference type="PANTHER" id="PTHR11561:SF0">
    <property type="entry name" value="PHOSPHOENOLPYRUVATE CARBOXYKINASE [GTP]-RELATED"/>
    <property type="match status" value="1"/>
</dbReference>
<dbReference type="Pfam" id="PF00821">
    <property type="entry name" value="PEPCK_GTP"/>
    <property type="match status" value="1"/>
</dbReference>
<dbReference type="Pfam" id="PF17297">
    <property type="entry name" value="PEPCK_N"/>
    <property type="match status" value="1"/>
</dbReference>
<dbReference type="PIRSF" id="PIRSF001348">
    <property type="entry name" value="PEP_carboxykinase_GTP"/>
    <property type="match status" value="1"/>
</dbReference>
<dbReference type="SUPFAM" id="SSF68923">
    <property type="entry name" value="PEP carboxykinase N-terminal domain"/>
    <property type="match status" value="1"/>
</dbReference>
<dbReference type="SUPFAM" id="SSF53795">
    <property type="entry name" value="PEP carboxykinase-like"/>
    <property type="match status" value="1"/>
</dbReference>
<dbReference type="PROSITE" id="PS00505">
    <property type="entry name" value="PEPCK_GTP"/>
    <property type="match status" value="1"/>
</dbReference>
<organism>
    <name type="scientific">Salinispora arenicola (strain CNS-205)</name>
    <dbReference type="NCBI Taxonomy" id="391037"/>
    <lineage>
        <taxon>Bacteria</taxon>
        <taxon>Bacillati</taxon>
        <taxon>Actinomycetota</taxon>
        <taxon>Actinomycetes</taxon>
        <taxon>Micromonosporales</taxon>
        <taxon>Micromonosporaceae</taxon>
        <taxon>Salinispora</taxon>
    </lineage>
</organism>
<reference key="1">
    <citation type="submission" date="2007-10" db="EMBL/GenBank/DDBJ databases">
        <title>Complete sequence of Salinispora arenicola CNS-205.</title>
        <authorList>
            <consortium name="US DOE Joint Genome Institute"/>
            <person name="Copeland A."/>
            <person name="Lucas S."/>
            <person name="Lapidus A."/>
            <person name="Barry K."/>
            <person name="Glavina del Rio T."/>
            <person name="Dalin E."/>
            <person name="Tice H."/>
            <person name="Pitluck S."/>
            <person name="Foster B."/>
            <person name="Schmutz J."/>
            <person name="Larimer F."/>
            <person name="Land M."/>
            <person name="Hauser L."/>
            <person name="Kyrpides N."/>
            <person name="Ivanova N."/>
            <person name="Jensen P.R."/>
            <person name="Moore B.S."/>
            <person name="Penn K."/>
            <person name="Jenkins C."/>
            <person name="Udwary D."/>
            <person name="Xiang L."/>
            <person name="Gontang E."/>
            <person name="Richardson P."/>
        </authorList>
    </citation>
    <scope>NUCLEOTIDE SEQUENCE [LARGE SCALE GENOMIC DNA]</scope>
    <source>
        <strain>CNS-205</strain>
    </source>
</reference>
<sequence>MVAPATVRGIDQAPTSHPKLLAWVREIAELTTPDRVVWADGSDEEWRRLTDELVEAGTLIRLNPEKKPNSFYARTDPTDVARVEERTYICSVDEADAGPTNNWMAPAEMKRTMTELYRGCMRGRTMYVIPFCMGPVEAEQPMFGVEITDSPYVVASMRIMTRMGAKILEAMGDDADFVHALHSIGAPLAPGQQDVSWPCNETKYISHFPETREIWSYGSGYGGNSLLGKKCYSLRIASVMGRDEGWLAEHMLILKITSPEGRVYHIAGAFPSACGKTNLAMLEPTIPGWKVETIGDDIAWMRFGPDGRLYAVNPEYGLFGVAPGTDWKTNANAMRTLDRGNSIFTNVALTDDGDIWWEGMGEPPAHLVDWKGNDWTPESDDLSSHANSRFCTPITQCPILAEDYYDPNGVPIDAILFGGRRRDTIPLVTEARDWVHGVYLGATLSSETTAAASGAVGVVRRDPMAMLPFIGYNAGDYFRHWIEMGKGTDGDESKLPRVYYVNWFRKDAEGSFLWPGFGENSRVLKWIVERIEGRADAVETPIGMVPAADALDVEGLDMTSEDIRIALKVDVNEWRDELPLVTEWFEKFGDKLPGVLWAELDALRARLDAEAQ</sequence>